<proteinExistence type="inferred from homology"/>
<name>TKNK_RAT</name>
<comment type="function">
    <text evidence="1">Tachykinins are active peptides which excite neurons, evoke behavioral responses, are potent vasodilators and secretagogues, and contract (directly or indirectly) many smooth muscles. Is a critical central regulator of gonadal function (By similarity).</text>
</comment>
<comment type="subcellular location">
    <subcellularLocation>
        <location>Secreted</location>
    </subcellularLocation>
</comment>
<comment type="similarity">
    <text evidence="4">Belongs to the tachykinin family.</text>
</comment>
<dbReference type="EMBL" id="M16410">
    <property type="protein sequence ID" value="AAA41711.1"/>
    <property type="molecule type" value="mRNA"/>
</dbReference>
<dbReference type="PIR" id="A43779">
    <property type="entry name" value="A43779"/>
</dbReference>
<dbReference type="RefSeq" id="NP_062035.1">
    <property type="nucleotide sequence ID" value="NM_019162.2"/>
</dbReference>
<dbReference type="SMR" id="P08435"/>
<dbReference type="STRING" id="10116.ENSRNOP00000005679"/>
<dbReference type="PhosphoSitePlus" id="P08435"/>
<dbReference type="PaxDb" id="10116-ENSRNOP00000005679"/>
<dbReference type="GeneID" id="29191"/>
<dbReference type="KEGG" id="rno:29191"/>
<dbReference type="AGR" id="RGD:3809"/>
<dbReference type="CTD" id="6866"/>
<dbReference type="RGD" id="3809">
    <property type="gene designation" value="Tac3"/>
</dbReference>
<dbReference type="eggNOG" id="ENOG502S4B9">
    <property type="taxonomic scope" value="Eukaryota"/>
</dbReference>
<dbReference type="InParanoid" id="P08435"/>
<dbReference type="OrthoDB" id="14319at9989"/>
<dbReference type="PhylomeDB" id="P08435"/>
<dbReference type="Reactome" id="R-RNO-380095">
    <property type="pathway name" value="Tachykinin receptors bind tachykinins"/>
</dbReference>
<dbReference type="Reactome" id="R-RNO-416476">
    <property type="pathway name" value="G alpha (q) signalling events"/>
</dbReference>
<dbReference type="PRO" id="PR:P08435"/>
<dbReference type="Proteomes" id="UP000002494">
    <property type="component" value="Unplaced"/>
</dbReference>
<dbReference type="GO" id="GO:0005576">
    <property type="term" value="C:extracellular region"/>
    <property type="evidence" value="ECO:0007669"/>
    <property type="project" value="UniProtKB-SubCell"/>
</dbReference>
<dbReference type="GO" id="GO:0007218">
    <property type="term" value="P:neuropeptide signaling pathway"/>
    <property type="evidence" value="ECO:0007669"/>
    <property type="project" value="UniProtKB-KW"/>
</dbReference>
<dbReference type="GO" id="GO:0045777">
    <property type="term" value="P:positive regulation of blood pressure"/>
    <property type="evidence" value="ECO:0000314"/>
    <property type="project" value="RGD"/>
</dbReference>
<dbReference type="GO" id="GO:0007217">
    <property type="term" value="P:tachykinin receptor signaling pathway"/>
    <property type="evidence" value="ECO:0007669"/>
    <property type="project" value="InterPro"/>
</dbReference>
<dbReference type="InterPro" id="IPR003635">
    <property type="entry name" value="Neurokinin-B/TAC3"/>
</dbReference>
<dbReference type="InterPro" id="IPR013055">
    <property type="entry name" value="Tachy_Neuro_lke_CS"/>
</dbReference>
<dbReference type="PANTHER" id="PTHR15536">
    <property type="entry name" value="TACHYKININ-3"/>
    <property type="match status" value="1"/>
</dbReference>
<dbReference type="PANTHER" id="PTHR15536:SF1">
    <property type="entry name" value="TACHYKININ-3"/>
    <property type="match status" value="1"/>
</dbReference>
<dbReference type="Pfam" id="PF03823">
    <property type="entry name" value="Neurokinin_B"/>
    <property type="match status" value="1"/>
</dbReference>
<dbReference type="PIRSF" id="PIRSF001843">
    <property type="entry name" value="Neurokinin"/>
    <property type="match status" value="1"/>
</dbReference>
<dbReference type="PRINTS" id="PR01828">
    <property type="entry name" value="NEUROKININB"/>
</dbReference>
<dbReference type="PROSITE" id="PS00267">
    <property type="entry name" value="TACHYKININ"/>
    <property type="match status" value="1"/>
</dbReference>
<sequence>MRSAMLFAAVLALSLAWTFGAACEEPQEQGGRLSKDSDLSLLPPPLLRRLYDSRSISLEGLLKVLSKASVGPKETSLPQKRDMHDFFVGLMGKRNSQPDTPADVVEENTPSFGVLK</sequence>
<gene>
    <name type="primary">Tac3</name>
    <name type="synonym">Nknb</name>
    <name type="synonym">Tac2</name>
</gene>
<keyword id="KW-0027">Amidation</keyword>
<keyword id="KW-0165">Cleavage on pair of basic residues</keyword>
<keyword id="KW-0527">Neuropeptide</keyword>
<keyword id="KW-1185">Reference proteome</keyword>
<keyword id="KW-0964">Secreted</keyword>
<keyword id="KW-0732">Signal</keyword>
<feature type="signal peptide" evidence="2">
    <location>
        <begin position="1"/>
        <end position="20"/>
    </location>
</feature>
<feature type="propeptide" id="PRO_0000033571">
    <location>
        <begin position="21"/>
        <end position="79"/>
    </location>
</feature>
<feature type="peptide" id="PRO_0000033572" description="Neurokinin-B">
    <location>
        <begin position="82"/>
        <end position="91"/>
    </location>
</feature>
<feature type="propeptide" id="PRO_0000033573">
    <location>
        <begin position="95"/>
        <end position="116"/>
    </location>
</feature>
<feature type="region of interest" description="Disordered" evidence="3">
    <location>
        <begin position="92"/>
        <end position="116"/>
    </location>
</feature>
<feature type="modified residue" description="Methionine amide" evidence="1">
    <location>
        <position position="91"/>
    </location>
</feature>
<organism>
    <name type="scientific">Rattus norvegicus</name>
    <name type="common">Rat</name>
    <dbReference type="NCBI Taxonomy" id="10116"/>
    <lineage>
        <taxon>Eukaryota</taxon>
        <taxon>Metazoa</taxon>
        <taxon>Chordata</taxon>
        <taxon>Craniata</taxon>
        <taxon>Vertebrata</taxon>
        <taxon>Euteleostomi</taxon>
        <taxon>Mammalia</taxon>
        <taxon>Eutheria</taxon>
        <taxon>Euarchontoglires</taxon>
        <taxon>Glires</taxon>
        <taxon>Rodentia</taxon>
        <taxon>Myomorpha</taxon>
        <taxon>Muroidea</taxon>
        <taxon>Muridae</taxon>
        <taxon>Murinae</taxon>
        <taxon>Rattus</taxon>
    </lineage>
</organism>
<accession>P08435</accession>
<evidence type="ECO:0000250" key="1"/>
<evidence type="ECO:0000255" key="2"/>
<evidence type="ECO:0000256" key="3">
    <source>
        <dbReference type="SAM" id="MobiDB-lite"/>
    </source>
</evidence>
<evidence type="ECO:0000305" key="4"/>
<reference key="1">
    <citation type="journal article" date="1987" name="Brain Res.">
        <title>A cDNA encoding the precursor of the rat neuropeptide, neurokinin B.</title>
        <authorList>
            <person name="Bonner T.I."/>
            <person name="Affolter H.-U."/>
            <person name="Young A.C."/>
            <person name="Young W.S. III"/>
        </authorList>
    </citation>
    <scope>NUCLEOTIDE SEQUENCE [MRNA]</scope>
</reference>
<protein>
    <recommendedName>
        <fullName>Tachykinin-3</fullName>
    </recommendedName>
    <component>
        <recommendedName>
            <fullName>Neurokinin-B</fullName>
            <shortName>NKB</shortName>
        </recommendedName>
        <alternativeName>
            <fullName>Neuromedin-K</fullName>
        </alternativeName>
    </component>
</protein>